<gene>
    <name evidence="1" type="primary">truA</name>
    <name type="ordered locus">Sama_2150</name>
</gene>
<organism>
    <name type="scientific">Shewanella amazonensis (strain ATCC BAA-1098 / SB2B)</name>
    <dbReference type="NCBI Taxonomy" id="326297"/>
    <lineage>
        <taxon>Bacteria</taxon>
        <taxon>Pseudomonadati</taxon>
        <taxon>Pseudomonadota</taxon>
        <taxon>Gammaproteobacteria</taxon>
        <taxon>Alteromonadales</taxon>
        <taxon>Shewanellaceae</taxon>
        <taxon>Shewanella</taxon>
    </lineage>
</organism>
<comment type="function">
    <text evidence="1">Formation of pseudouridine at positions 38, 39 and 40 in the anticodon stem and loop of transfer RNAs.</text>
</comment>
<comment type="catalytic activity">
    <reaction evidence="1">
        <text>uridine(38/39/40) in tRNA = pseudouridine(38/39/40) in tRNA</text>
        <dbReference type="Rhea" id="RHEA:22376"/>
        <dbReference type="Rhea" id="RHEA-COMP:10085"/>
        <dbReference type="Rhea" id="RHEA-COMP:10087"/>
        <dbReference type="ChEBI" id="CHEBI:65314"/>
        <dbReference type="ChEBI" id="CHEBI:65315"/>
        <dbReference type="EC" id="5.4.99.12"/>
    </reaction>
</comment>
<comment type="subunit">
    <text evidence="1">Homodimer.</text>
</comment>
<comment type="similarity">
    <text evidence="1">Belongs to the tRNA pseudouridine synthase TruA family.</text>
</comment>
<protein>
    <recommendedName>
        <fullName evidence="1">tRNA pseudouridine synthase A</fullName>
        <ecNumber evidence="1">5.4.99.12</ecNumber>
    </recommendedName>
    <alternativeName>
        <fullName evidence="1">tRNA pseudouridine(38-40) synthase</fullName>
    </alternativeName>
    <alternativeName>
        <fullName evidence="1">tRNA pseudouridylate synthase I</fullName>
    </alternativeName>
    <alternativeName>
        <fullName evidence="1">tRNA-uridine isomerase I</fullName>
    </alternativeName>
</protein>
<feature type="chain" id="PRO_1000017164" description="tRNA pseudouridine synthase A">
    <location>
        <begin position="1"/>
        <end position="261"/>
    </location>
</feature>
<feature type="active site" description="Nucleophile" evidence="1">
    <location>
        <position position="51"/>
    </location>
</feature>
<feature type="binding site" evidence="1">
    <location>
        <position position="109"/>
    </location>
    <ligand>
        <name>substrate</name>
    </ligand>
</feature>
<sequence>MRIALGIEYDGSKFYGWQRQAEVNSVQAELERALSIVANEPIEVQCAGRTDAGVHATGQVVHFDTNAVRKEGAWTLGVNVHLPDDIAVRWAMPVNDDFHARFSATARRYRYVIFNHNFRPGILRKGVSHYHGDIDVERMHDAAQALIGERDFTSFRAIGCQSNTPFRNVHKVSVSRHGMYIVVDIQANAFLHHMVRNIVGSLLEIGLGNQPLDWMATLLEAKDRSQAAATAKPHGLYLVDVTYPESFGLPKLSLGPLFMPD</sequence>
<evidence type="ECO:0000255" key="1">
    <source>
        <dbReference type="HAMAP-Rule" id="MF_00171"/>
    </source>
</evidence>
<accession>A1S7J9</accession>
<proteinExistence type="inferred from homology"/>
<name>TRUA_SHEAM</name>
<reference key="1">
    <citation type="submission" date="2006-12" db="EMBL/GenBank/DDBJ databases">
        <title>Complete sequence of Shewanella amazonensis SB2B.</title>
        <authorList>
            <consortium name="US DOE Joint Genome Institute"/>
            <person name="Copeland A."/>
            <person name="Lucas S."/>
            <person name="Lapidus A."/>
            <person name="Barry K."/>
            <person name="Detter J.C."/>
            <person name="Glavina del Rio T."/>
            <person name="Hammon N."/>
            <person name="Israni S."/>
            <person name="Dalin E."/>
            <person name="Tice H."/>
            <person name="Pitluck S."/>
            <person name="Munk A.C."/>
            <person name="Brettin T."/>
            <person name="Bruce D."/>
            <person name="Han C."/>
            <person name="Tapia R."/>
            <person name="Gilna P."/>
            <person name="Schmutz J."/>
            <person name="Larimer F."/>
            <person name="Land M."/>
            <person name="Hauser L."/>
            <person name="Kyrpides N."/>
            <person name="Mikhailova N."/>
            <person name="Fredrickson J."/>
            <person name="Richardson P."/>
        </authorList>
    </citation>
    <scope>NUCLEOTIDE SEQUENCE [LARGE SCALE GENOMIC DNA]</scope>
    <source>
        <strain>ATCC BAA-1098 / SB2B</strain>
    </source>
</reference>
<dbReference type="EC" id="5.4.99.12" evidence="1"/>
<dbReference type="EMBL" id="CP000507">
    <property type="protein sequence ID" value="ABM00356.1"/>
    <property type="molecule type" value="Genomic_DNA"/>
</dbReference>
<dbReference type="RefSeq" id="WP_011760263.1">
    <property type="nucleotide sequence ID" value="NC_008700.1"/>
</dbReference>
<dbReference type="SMR" id="A1S7J9"/>
<dbReference type="STRING" id="326297.Sama_2150"/>
<dbReference type="KEGG" id="saz:Sama_2150"/>
<dbReference type="eggNOG" id="COG0101">
    <property type="taxonomic scope" value="Bacteria"/>
</dbReference>
<dbReference type="HOGENOM" id="CLU_014673_0_2_6"/>
<dbReference type="OrthoDB" id="9811823at2"/>
<dbReference type="Proteomes" id="UP000009175">
    <property type="component" value="Chromosome"/>
</dbReference>
<dbReference type="GO" id="GO:0003723">
    <property type="term" value="F:RNA binding"/>
    <property type="evidence" value="ECO:0007669"/>
    <property type="project" value="InterPro"/>
</dbReference>
<dbReference type="GO" id="GO:0160147">
    <property type="term" value="F:tRNA pseudouridine(38-40) synthase activity"/>
    <property type="evidence" value="ECO:0007669"/>
    <property type="project" value="UniProtKB-EC"/>
</dbReference>
<dbReference type="GO" id="GO:0031119">
    <property type="term" value="P:tRNA pseudouridine synthesis"/>
    <property type="evidence" value="ECO:0007669"/>
    <property type="project" value="UniProtKB-UniRule"/>
</dbReference>
<dbReference type="CDD" id="cd02570">
    <property type="entry name" value="PseudoU_synth_EcTruA"/>
    <property type="match status" value="1"/>
</dbReference>
<dbReference type="FunFam" id="3.30.70.580:FF:000001">
    <property type="entry name" value="tRNA pseudouridine synthase A"/>
    <property type="match status" value="1"/>
</dbReference>
<dbReference type="FunFam" id="3.30.70.660:FF:000001">
    <property type="entry name" value="tRNA pseudouridine synthase A"/>
    <property type="match status" value="1"/>
</dbReference>
<dbReference type="Gene3D" id="3.30.70.660">
    <property type="entry name" value="Pseudouridine synthase I, catalytic domain, C-terminal subdomain"/>
    <property type="match status" value="1"/>
</dbReference>
<dbReference type="Gene3D" id="3.30.70.580">
    <property type="entry name" value="Pseudouridine synthase I, catalytic domain, N-terminal subdomain"/>
    <property type="match status" value="1"/>
</dbReference>
<dbReference type="HAMAP" id="MF_00171">
    <property type="entry name" value="TruA"/>
    <property type="match status" value="1"/>
</dbReference>
<dbReference type="InterPro" id="IPR020103">
    <property type="entry name" value="PsdUridine_synth_cat_dom_sf"/>
</dbReference>
<dbReference type="InterPro" id="IPR001406">
    <property type="entry name" value="PsdUridine_synth_TruA"/>
</dbReference>
<dbReference type="InterPro" id="IPR020097">
    <property type="entry name" value="PsdUridine_synth_TruA_a/b_dom"/>
</dbReference>
<dbReference type="InterPro" id="IPR020095">
    <property type="entry name" value="PsdUridine_synth_TruA_C"/>
</dbReference>
<dbReference type="InterPro" id="IPR020094">
    <property type="entry name" value="TruA/RsuA/RluB/E/F_N"/>
</dbReference>
<dbReference type="NCBIfam" id="TIGR00071">
    <property type="entry name" value="hisT_truA"/>
    <property type="match status" value="1"/>
</dbReference>
<dbReference type="PANTHER" id="PTHR11142">
    <property type="entry name" value="PSEUDOURIDYLATE SYNTHASE"/>
    <property type="match status" value="1"/>
</dbReference>
<dbReference type="PANTHER" id="PTHR11142:SF0">
    <property type="entry name" value="TRNA PSEUDOURIDINE SYNTHASE-LIKE 1"/>
    <property type="match status" value="1"/>
</dbReference>
<dbReference type="Pfam" id="PF01416">
    <property type="entry name" value="PseudoU_synth_1"/>
    <property type="match status" value="2"/>
</dbReference>
<dbReference type="PIRSF" id="PIRSF001430">
    <property type="entry name" value="tRNA_psdUrid_synth"/>
    <property type="match status" value="1"/>
</dbReference>
<dbReference type="SUPFAM" id="SSF55120">
    <property type="entry name" value="Pseudouridine synthase"/>
    <property type="match status" value="1"/>
</dbReference>
<keyword id="KW-0413">Isomerase</keyword>
<keyword id="KW-1185">Reference proteome</keyword>
<keyword id="KW-0819">tRNA processing</keyword>